<sequence>MTNDSASRTPSDNTELTEMQRYVTQQRGTEPAFSGKLLHNKRTGVYHCLCCQAPLFYSDSKYDSGCGWPSFDQPVSSEAVRYLEDDSHNMRRIEIRCGQCDAHLGHVFPDGPKTTGERYCVNSASLSFIDDVDGERVDG</sequence>
<protein>
    <recommendedName>
        <fullName evidence="1">Peptide methionine sulfoxide reductase MsrB</fullName>
        <ecNumber evidence="1">1.8.4.12</ecNumber>
    </recommendedName>
    <alternativeName>
        <fullName evidence="1">Peptide-methionine (R)-S-oxide reductase</fullName>
    </alternativeName>
</protein>
<evidence type="ECO:0000255" key="1">
    <source>
        <dbReference type="HAMAP-Rule" id="MF_01400"/>
    </source>
</evidence>
<evidence type="ECO:0000255" key="2">
    <source>
        <dbReference type="PROSITE-ProRule" id="PRU01126"/>
    </source>
</evidence>
<reference key="1">
    <citation type="submission" date="2009-07" db="EMBL/GenBank/DDBJ databases">
        <title>Complete sequence of Pectobacterium carotovorum subsp. carotovorum PC1.</title>
        <authorList>
            <consortium name="US DOE Joint Genome Institute"/>
            <person name="Lucas S."/>
            <person name="Copeland A."/>
            <person name="Lapidus A."/>
            <person name="Glavina del Rio T."/>
            <person name="Tice H."/>
            <person name="Bruce D."/>
            <person name="Goodwin L."/>
            <person name="Pitluck S."/>
            <person name="Munk A.C."/>
            <person name="Brettin T."/>
            <person name="Detter J.C."/>
            <person name="Han C."/>
            <person name="Tapia R."/>
            <person name="Larimer F."/>
            <person name="Land M."/>
            <person name="Hauser L."/>
            <person name="Kyrpides N."/>
            <person name="Mikhailova N."/>
            <person name="Balakrishnan V."/>
            <person name="Glasner J."/>
            <person name="Perna N.T."/>
        </authorList>
    </citation>
    <scope>NUCLEOTIDE SEQUENCE [LARGE SCALE GENOMIC DNA]</scope>
    <source>
        <strain>PC1</strain>
    </source>
</reference>
<organism>
    <name type="scientific">Pectobacterium carotovorum subsp. carotovorum (strain PC1)</name>
    <dbReference type="NCBI Taxonomy" id="561230"/>
    <lineage>
        <taxon>Bacteria</taxon>
        <taxon>Pseudomonadati</taxon>
        <taxon>Pseudomonadota</taxon>
        <taxon>Gammaproteobacteria</taxon>
        <taxon>Enterobacterales</taxon>
        <taxon>Pectobacteriaceae</taxon>
        <taxon>Pectobacterium</taxon>
    </lineage>
</organism>
<dbReference type="EC" id="1.8.4.12" evidence="1"/>
<dbReference type="EMBL" id="CP001657">
    <property type="protein sequence ID" value="ACT13007.1"/>
    <property type="molecule type" value="Genomic_DNA"/>
</dbReference>
<dbReference type="RefSeq" id="WP_015840200.1">
    <property type="nucleotide sequence ID" value="NC_012917.1"/>
</dbReference>
<dbReference type="SMR" id="C6DGV8"/>
<dbReference type="STRING" id="561230.PC1_1966"/>
<dbReference type="GeneID" id="67793965"/>
<dbReference type="KEGG" id="pct:PC1_1966"/>
<dbReference type="eggNOG" id="COG0229">
    <property type="taxonomic scope" value="Bacteria"/>
</dbReference>
<dbReference type="HOGENOM" id="CLU_031040_8_5_6"/>
<dbReference type="OrthoDB" id="9785497at2"/>
<dbReference type="Proteomes" id="UP000002736">
    <property type="component" value="Chromosome"/>
</dbReference>
<dbReference type="GO" id="GO:0005737">
    <property type="term" value="C:cytoplasm"/>
    <property type="evidence" value="ECO:0007669"/>
    <property type="project" value="TreeGrafter"/>
</dbReference>
<dbReference type="GO" id="GO:0033743">
    <property type="term" value="F:peptide-methionine (R)-S-oxide reductase activity"/>
    <property type="evidence" value="ECO:0007669"/>
    <property type="project" value="UniProtKB-UniRule"/>
</dbReference>
<dbReference type="GO" id="GO:0008270">
    <property type="term" value="F:zinc ion binding"/>
    <property type="evidence" value="ECO:0007669"/>
    <property type="project" value="UniProtKB-UniRule"/>
</dbReference>
<dbReference type="GO" id="GO:0030091">
    <property type="term" value="P:protein repair"/>
    <property type="evidence" value="ECO:0007669"/>
    <property type="project" value="InterPro"/>
</dbReference>
<dbReference type="GO" id="GO:0006979">
    <property type="term" value="P:response to oxidative stress"/>
    <property type="evidence" value="ECO:0007669"/>
    <property type="project" value="InterPro"/>
</dbReference>
<dbReference type="FunFam" id="2.170.150.20:FF:000001">
    <property type="entry name" value="Peptide methionine sulfoxide reductase MsrB"/>
    <property type="match status" value="1"/>
</dbReference>
<dbReference type="Gene3D" id="2.170.150.20">
    <property type="entry name" value="Peptide methionine sulfoxide reductase"/>
    <property type="match status" value="1"/>
</dbReference>
<dbReference type="HAMAP" id="MF_01400">
    <property type="entry name" value="MsrB"/>
    <property type="match status" value="1"/>
</dbReference>
<dbReference type="InterPro" id="IPR028427">
    <property type="entry name" value="Met_Sox_Rdtase_MsrB"/>
</dbReference>
<dbReference type="InterPro" id="IPR002579">
    <property type="entry name" value="Met_Sox_Rdtase_MsrB_dom"/>
</dbReference>
<dbReference type="InterPro" id="IPR011057">
    <property type="entry name" value="Mss4-like_sf"/>
</dbReference>
<dbReference type="NCBIfam" id="TIGR00357">
    <property type="entry name" value="peptide-methionine (R)-S-oxide reductase MsrB"/>
    <property type="match status" value="1"/>
</dbReference>
<dbReference type="PANTHER" id="PTHR10173">
    <property type="entry name" value="METHIONINE SULFOXIDE REDUCTASE"/>
    <property type="match status" value="1"/>
</dbReference>
<dbReference type="PANTHER" id="PTHR10173:SF52">
    <property type="entry name" value="METHIONINE-R-SULFOXIDE REDUCTASE B1"/>
    <property type="match status" value="1"/>
</dbReference>
<dbReference type="Pfam" id="PF01641">
    <property type="entry name" value="SelR"/>
    <property type="match status" value="1"/>
</dbReference>
<dbReference type="SUPFAM" id="SSF51316">
    <property type="entry name" value="Mss4-like"/>
    <property type="match status" value="1"/>
</dbReference>
<dbReference type="PROSITE" id="PS51790">
    <property type="entry name" value="MSRB"/>
    <property type="match status" value="1"/>
</dbReference>
<accession>C6DGV8</accession>
<feature type="chain" id="PRO_1000215177" description="Peptide methionine sulfoxide reductase MsrB">
    <location>
        <begin position="1"/>
        <end position="139"/>
    </location>
</feature>
<feature type="domain" description="MsrB" evidence="2">
    <location>
        <begin position="9"/>
        <end position="131"/>
    </location>
</feature>
<feature type="active site" description="Nucleophile" evidence="2">
    <location>
        <position position="120"/>
    </location>
</feature>
<feature type="binding site" evidence="2">
    <location>
        <position position="48"/>
    </location>
    <ligand>
        <name>Zn(2+)</name>
        <dbReference type="ChEBI" id="CHEBI:29105"/>
    </ligand>
</feature>
<feature type="binding site" evidence="2">
    <location>
        <position position="51"/>
    </location>
    <ligand>
        <name>Zn(2+)</name>
        <dbReference type="ChEBI" id="CHEBI:29105"/>
    </ligand>
</feature>
<feature type="binding site" evidence="2">
    <location>
        <position position="97"/>
    </location>
    <ligand>
        <name>Zn(2+)</name>
        <dbReference type="ChEBI" id="CHEBI:29105"/>
    </ligand>
</feature>
<feature type="binding site" evidence="2">
    <location>
        <position position="100"/>
    </location>
    <ligand>
        <name>Zn(2+)</name>
        <dbReference type="ChEBI" id="CHEBI:29105"/>
    </ligand>
</feature>
<name>MSRB_PECCP</name>
<keyword id="KW-0479">Metal-binding</keyword>
<keyword id="KW-0560">Oxidoreductase</keyword>
<keyword id="KW-0862">Zinc</keyword>
<proteinExistence type="inferred from homology"/>
<comment type="catalytic activity">
    <reaction evidence="1">
        <text>L-methionyl-[protein] + [thioredoxin]-disulfide + H2O = L-methionyl-(R)-S-oxide-[protein] + [thioredoxin]-dithiol</text>
        <dbReference type="Rhea" id="RHEA:24164"/>
        <dbReference type="Rhea" id="RHEA-COMP:10698"/>
        <dbReference type="Rhea" id="RHEA-COMP:10700"/>
        <dbReference type="Rhea" id="RHEA-COMP:12313"/>
        <dbReference type="Rhea" id="RHEA-COMP:12314"/>
        <dbReference type="ChEBI" id="CHEBI:15377"/>
        <dbReference type="ChEBI" id="CHEBI:16044"/>
        <dbReference type="ChEBI" id="CHEBI:29950"/>
        <dbReference type="ChEBI" id="CHEBI:45764"/>
        <dbReference type="ChEBI" id="CHEBI:50058"/>
        <dbReference type="EC" id="1.8.4.12"/>
    </reaction>
</comment>
<comment type="cofactor">
    <cofactor evidence="1">
        <name>Zn(2+)</name>
        <dbReference type="ChEBI" id="CHEBI:29105"/>
    </cofactor>
    <text evidence="1">Binds 1 zinc ion per subunit. The zinc ion is important for the structural integrity of the protein.</text>
</comment>
<comment type="similarity">
    <text evidence="1">Belongs to the MsrB Met sulfoxide reductase family.</text>
</comment>
<gene>
    <name evidence="1" type="primary">msrB</name>
    <name type="ordered locus">PC1_1966</name>
</gene>